<comment type="function">
    <text evidence="1">Bifunctional enzyme that catalyzes the oxidative decarboxylation of UDP-glucuronic acid (UDP-GlcUA) to UDP-4-keto-arabinose (UDP-Ara4O) and the addition of a formyl group to UDP-4-amino-4-deoxy-L-arabinose (UDP-L-Ara4N) to form UDP-L-4-formamido-arabinose (UDP-L-Ara4FN). The modified arabinose is attached to lipid A and is required for resistance to polymyxin and cationic antimicrobial peptides (By similarity).</text>
</comment>
<comment type="catalytic activity">
    <reaction>
        <text>UDP-alpha-D-glucuronate + NAD(+) = UDP-beta-L-threo-pentopyranos-4-ulose + CO2 + NADH</text>
        <dbReference type="Rhea" id="RHEA:24702"/>
        <dbReference type="ChEBI" id="CHEBI:16526"/>
        <dbReference type="ChEBI" id="CHEBI:57540"/>
        <dbReference type="ChEBI" id="CHEBI:57945"/>
        <dbReference type="ChEBI" id="CHEBI:58052"/>
        <dbReference type="ChEBI" id="CHEBI:58710"/>
        <dbReference type="EC" id="1.1.1.305"/>
    </reaction>
</comment>
<comment type="catalytic activity">
    <reaction>
        <text>UDP-4-amino-4-deoxy-beta-L-arabinose + (6R)-10-formyltetrahydrofolate = UDP-4-deoxy-4-formamido-beta-L-arabinose + (6S)-5,6,7,8-tetrahydrofolate + H(+)</text>
        <dbReference type="Rhea" id="RHEA:24706"/>
        <dbReference type="ChEBI" id="CHEBI:15378"/>
        <dbReference type="ChEBI" id="CHEBI:57453"/>
        <dbReference type="ChEBI" id="CHEBI:58708"/>
        <dbReference type="ChEBI" id="CHEBI:58709"/>
        <dbReference type="ChEBI" id="CHEBI:195366"/>
        <dbReference type="EC" id="2.1.2.13"/>
    </reaction>
</comment>
<comment type="pathway">
    <text>Nucleotide-sugar biosynthesis; UDP-4-deoxy-4-formamido-beta-L-arabinose biosynthesis; UDP-4-deoxy-4-formamido-beta-L-arabinose from UDP-alpha-D-glucuronate: step 1/3.</text>
</comment>
<comment type="pathway">
    <text>Nucleotide-sugar biosynthesis; UDP-4-deoxy-4-formamido-beta-L-arabinose biosynthesis; UDP-4-deoxy-4-formamido-beta-L-arabinose from UDP-alpha-D-glucuronate: step 3/3.</text>
</comment>
<comment type="pathway">
    <text>Bacterial outer membrane biogenesis; lipopolysaccharide biosynthesis.</text>
</comment>
<comment type="subunit">
    <text evidence="1">Homohexamer, formed by a dimer of trimers.</text>
</comment>
<comment type="induction">
    <text evidence="2 3">Induced by BasR.</text>
</comment>
<comment type="similarity">
    <text evidence="4">In the N-terminal section; belongs to the Fmt family. UDP-L-Ara4N formyltransferase subfamily.</text>
</comment>
<comment type="similarity">
    <text evidence="4">In the C-terminal section; belongs to the NAD(P)-dependent epimerase/dehydratase family. UDP-glucuronic acid decarboxylase subfamily.</text>
</comment>
<name>ARNA_SALTY</name>
<protein>
    <recommendedName>
        <fullName>Bifunctional polymyxin resistance protein ArnA</fullName>
    </recommendedName>
    <domain>
        <recommendedName>
            <fullName>UDP-4-amino-4-deoxy-L-arabinose formyltransferase</fullName>
            <ecNumber>2.1.2.13</ecNumber>
        </recommendedName>
        <alternativeName>
            <fullName>ArnAFT</fullName>
        </alternativeName>
        <alternativeName>
            <fullName>UDP-L-Ara4N formyltransferase</fullName>
        </alternativeName>
    </domain>
    <domain>
        <recommendedName>
            <fullName>UDP-glucuronic acid oxidase, UDP-4-keto-hexauronic acid decarboxylating</fullName>
            <ecNumber>1.1.1.305</ecNumber>
        </recommendedName>
        <alternativeName>
            <fullName>ArnADH</fullName>
        </alternativeName>
        <alternativeName>
            <fullName>UDP-GlcUA decarboxylase</fullName>
        </alternativeName>
        <alternativeName>
            <fullName>UDP-glucuronic acid dehydrogenase</fullName>
        </alternativeName>
    </domain>
</protein>
<gene>
    <name type="primary">arnA</name>
    <name type="synonym">pbgP3</name>
    <name type="synonym">pmrI</name>
    <name type="ordered locus">STM2299</name>
</gene>
<keyword id="KW-0002">3D-structure</keyword>
<keyword id="KW-0046">Antibiotic resistance</keyword>
<keyword id="KW-0441">Lipid A biosynthesis</keyword>
<keyword id="KW-0444">Lipid biosynthesis</keyword>
<keyword id="KW-0443">Lipid metabolism</keyword>
<keyword id="KW-0448">Lipopolysaccharide biosynthesis</keyword>
<keyword id="KW-0511">Multifunctional enzyme</keyword>
<keyword id="KW-0520">NAD</keyword>
<keyword id="KW-0560">Oxidoreductase</keyword>
<keyword id="KW-1185">Reference proteome</keyword>
<keyword id="KW-0808">Transferase</keyword>
<dbReference type="EC" id="2.1.2.13"/>
<dbReference type="EC" id="1.1.1.305"/>
<dbReference type="EMBL" id="AF036677">
    <property type="protein sequence ID" value="AAC04772.1"/>
    <property type="molecule type" value="Genomic_DNA"/>
</dbReference>
<dbReference type="EMBL" id="AE006468">
    <property type="protein sequence ID" value="AAL21200.1"/>
    <property type="molecule type" value="Genomic_DNA"/>
</dbReference>
<dbReference type="RefSeq" id="WP_000648776.1">
    <property type="nucleotide sequence ID" value="NC_003197.2"/>
</dbReference>
<dbReference type="PDB" id="8GJH">
    <property type="method" value="X-ray"/>
    <property type="resolution" value="3.60 A"/>
    <property type="chains" value="A/B/C/D/E/F=1-660"/>
</dbReference>
<dbReference type="PDBsum" id="8GJH"/>
<dbReference type="SMR" id="O52325"/>
<dbReference type="STRING" id="99287.STM2299"/>
<dbReference type="PaxDb" id="99287-STM2299"/>
<dbReference type="KEGG" id="stm:STM2299"/>
<dbReference type="PATRIC" id="fig|99287.12.peg.2434"/>
<dbReference type="HOGENOM" id="CLU_007383_23_2_6"/>
<dbReference type="OMA" id="VRYCVKY"/>
<dbReference type="PhylomeDB" id="O52325"/>
<dbReference type="BioCyc" id="SENT99287:STM2299-MONOMER"/>
<dbReference type="UniPathway" id="UPA00030"/>
<dbReference type="UniPathway" id="UPA00032">
    <property type="reaction ID" value="UER00492"/>
</dbReference>
<dbReference type="UniPathway" id="UPA00032">
    <property type="reaction ID" value="UER00494"/>
</dbReference>
<dbReference type="Proteomes" id="UP000001014">
    <property type="component" value="Chromosome"/>
</dbReference>
<dbReference type="GO" id="GO:0016020">
    <property type="term" value="C:membrane"/>
    <property type="evidence" value="ECO:0007669"/>
    <property type="project" value="GOC"/>
</dbReference>
<dbReference type="GO" id="GO:0016831">
    <property type="term" value="F:carboxy-lyase activity"/>
    <property type="evidence" value="ECO:0007669"/>
    <property type="project" value="InterPro"/>
</dbReference>
<dbReference type="GO" id="GO:0099619">
    <property type="term" value="F:UDP-4-amino-4-deoxy-L-arabinose formyltransferase activity"/>
    <property type="evidence" value="ECO:0007669"/>
    <property type="project" value="UniProtKB-EC"/>
</dbReference>
<dbReference type="GO" id="GO:0099618">
    <property type="term" value="F:UDP-glucuronate dehydrogenase activity"/>
    <property type="evidence" value="ECO:0007669"/>
    <property type="project" value="UniProtKB-EC"/>
</dbReference>
<dbReference type="GO" id="GO:0009245">
    <property type="term" value="P:lipid A biosynthetic process"/>
    <property type="evidence" value="ECO:0007669"/>
    <property type="project" value="UniProtKB-KW"/>
</dbReference>
<dbReference type="GO" id="GO:0009103">
    <property type="term" value="P:lipopolysaccharide biosynthetic process"/>
    <property type="evidence" value="ECO:0007669"/>
    <property type="project" value="UniProtKB-UniRule"/>
</dbReference>
<dbReference type="GO" id="GO:0046677">
    <property type="term" value="P:response to antibiotic"/>
    <property type="evidence" value="ECO:0007669"/>
    <property type="project" value="UniProtKB-KW"/>
</dbReference>
<dbReference type="CDD" id="cd08702">
    <property type="entry name" value="Arna_FMT_C"/>
    <property type="match status" value="1"/>
</dbReference>
<dbReference type="CDD" id="cd05257">
    <property type="entry name" value="Arna_like_SDR_e"/>
    <property type="match status" value="1"/>
</dbReference>
<dbReference type="FunFam" id="3.40.50.720:FF:000197">
    <property type="entry name" value="Bifunctional polymyxin resistance protein ArnA"/>
    <property type="match status" value="1"/>
</dbReference>
<dbReference type="Gene3D" id="3.40.50.12230">
    <property type="match status" value="1"/>
</dbReference>
<dbReference type="Gene3D" id="3.40.50.720">
    <property type="entry name" value="NAD(P)-binding Rossmann-like Domain"/>
    <property type="match status" value="1"/>
</dbReference>
<dbReference type="HAMAP" id="MF_01166">
    <property type="entry name" value="ArnA"/>
    <property type="match status" value="1"/>
</dbReference>
<dbReference type="InterPro" id="IPR045869">
    <property type="entry name" value="Arna-like_SDR_e"/>
</dbReference>
<dbReference type="InterPro" id="IPR021168">
    <property type="entry name" value="Bifun_polymyxin_resist_ArnA"/>
</dbReference>
<dbReference type="InterPro" id="IPR001509">
    <property type="entry name" value="Epimerase_deHydtase"/>
</dbReference>
<dbReference type="InterPro" id="IPR005793">
    <property type="entry name" value="Formyl_trans_C"/>
</dbReference>
<dbReference type="InterPro" id="IPR002376">
    <property type="entry name" value="Formyl_transf_N"/>
</dbReference>
<dbReference type="InterPro" id="IPR036477">
    <property type="entry name" value="Formyl_transf_N_sf"/>
</dbReference>
<dbReference type="InterPro" id="IPR011034">
    <property type="entry name" value="Formyl_transferase-like_C_sf"/>
</dbReference>
<dbReference type="InterPro" id="IPR050177">
    <property type="entry name" value="Lipid_A_modif_metabolic_enz"/>
</dbReference>
<dbReference type="InterPro" id="IPR036291">
    <property type="entry name" value="NAD(P)-bd_dom_sf"/>
</dbReference>
<dbReference type="NCBIfam" id="NF005414">
    <property type="entry name" value="PRK06988.1"/>
    <property type="match status" value="1"/>
</dbReference>
<dbReference type="NCBIfam" id="NF005998">
    <property type="entry name" value="PRK08125.1"/>
    <property type="match status" value="1"/>
</dbReference>
<dbReference type="NCBIfam" id="NF008872">
    <property type="entry name" value="PRK11908.1"/>
    <property type="match status" value="1"/>
</dbReference>
<dbReference type="PANTHER" id="PTHR43245">
    <property type="entry name" value="BIFUNCTIONAL POLYMYXIN RESISTANCE PROTEIN ARNA"/>
    <property type="match status" value="1"/>
</dbReference>
<dbReference type="PANTHER" id="PTHR43245:SF13">
    <property type="entry name" value="UDP-D-APIOSE_UDP-D-XYLOSE SYNTHASE 2"/>
    <property type="match status" value="1"/>
</dbReference>
<dbReference type="Pfam" id="PF01370">
    <property type="entry name" value="Epimerase"/>
    <property type="match status" value="1"/>
</dbReference>
<dbReference type="Pfam" id="PF02911">
    <property type="entry name" value="Formyl_trans_C"/>
    <property type="match status" value="1"/>
</dbReference>
<dbReference type="Pfam" id="PF00551">
    <property type="entry name" value="Formyl_trans_N"/>
    <property type="match status" value="1"/>
</dbReference>
<dbReference type="PIRSF" id="PIRSF036506">
    <property type="entry name" value="Bifun_polymyxin_resist_ArnA"/>
    <property type="match status" value="1"/>
</dbReference>
<dbReference type="SUPFAM" id="SSF50486">
    <property type="entry name" value="FMT C-terminal domain-like"/>
    <property type="match status" value="1"/>
</dbReference>
<dbReference type="SUPFAM" id="SSF53328">
    <property type="entry name" value="Formyltransferase"/>
    <property type="match status" value="1"/>
</dbReference>
<dbReference type="SUPFAM" id="SSF51735">
    <property type="entry name" value="NAD(P)-binding Rossmann-fold domains"/>
    <property type="match status" value="1"/>
</dbReference>
<evidence type="ECO:0000250" key="1"/>
<evidence type="ECO:0000269" key="2">
    <source>
    </source>
</evidence>
<evidence type="ECO:0000269" key="3">
    <source>
    </source>
</evidence>
<evidence type="ECO:0000305" key="4"/>
<feature type="chain" id="PRO_0000083109" description="Bifunctional polymyxin resistance protein ArnA">
    <location>
        <begin position="1"/>
        <end position="660"/>
    </location>
</feature>
<feature type="region of interest" description="Formyltransferase ArnAFT">
    <location>
        <begin position="1"/>
        <end position="304"/>
    </location>
</feature>
<feature type="region of interest" description="Dehydrogenase ArnADH">
    <location>
        <begin position="314"/>
        <end position="660"/>
    </location>
</feature>
<feature type="active site" description="Proton donor; for formyltransferase activity" evidence="1">
    <location>
        <position position="104"/>
    </location>
</feature>
<feature type="active site" description="Proton acceptor; for decarboxylase activity" evidence="1">
    <location>
        <position position="434"/>
    </location>
</feature>
<feature type="active site" description="Proton donor; for decarboxylase activity" evidence="1">
    <location>
        <position position="619"/>
    </location>
</feature>
<feature type="binding site" evidence="1">
    <location>
        <position position="114"/>
    </location>
    <ligand>
        <name>(6R)-10-formyltetrahydrofolate</name>
        <dbReference type="ChEBI" id="CHEBI:195366"/>
    </ligand>
</feature>
<feature type="binding site" evidence="1">
    <location>
        <begin position="136"/>
        <end position="140"/>
    </location>
    <ligand>
        <name>(6R)-10-formyltetrahydrofolate</name>
        <dbReference type="ChEBI" id="CHEBI:195366"/>
    </ligand>
</feature>
<feature type="binding site" evidence="1">
    <location>
        <position position="347"/>
    </location>
    <ligand>
        <name>NAD(+)</name>
        <dbReference type="ChEBI" id="CHEBI:57540"/>
    </ligand>
</feature>
<feature type="binding site" evidence="1">
    <location>
        <begin position="368"/>
        <end position="369"/>
    </location>
    <ligand>
        <name>NAD(+)</name>
        <dbReference type="ChEBI" id="CHEBI:57540"/>
    </ligand>
</feature>
<feature type="binding site" evidence="1">
    <location>
        <position position="393"/>
    </location>
    <ligand>
        <name>UDP-alpha-D-glucuronate</name>
        <dbReference type="ChEBI" id="CHEBI:58052"/>
    </ligand>
</feature>
<feature type="binding site" evidence="1">
    <location>
        <position position="398"/>
    </location>
    <ligand>
        <name>UDP-alpha-D-glucuronate</name>
        <dbReference type="ChEBI" id="CHEBI:58052"/>
    </ligand>
</feature>
<feature type="binding site" evidence="1">
    <location>
        <begin position="432"/>
        <end position="433"/>
    </location>
    <ligand>
        <name>UDP-alpha-D-glucuronate</name>
        <dbReference type="ChEBI" id="CHEBI:58052"/>
    </ligand>
</feature>
<feature type="binding site" evidence="1">
    <location>
        <position position="460"/>
    </location>
    <ligand>
        <name>UDP-alpha-D-glucuronate</name>
        <dbReference type="ChEBI" id="CHEBI:58052"/>
    </ligand>
</feature>
<feature type="binding site" evidence="1">
    <location>
        <position position="492"/>
    </location>
    <ligand>
        <name>UDP-alpha-D-glucuronate</name>
        <dbReference type="ChEBI" id="CHEBI:58052"/>
    </ligand>
</feature>
<feature type="binding site" evidence="1">
    <location>
        <begin position="526"/>
        <end position="535"/>
    </location>
    <ligand>
        <name>UDP-alpha-D-glucuronate</name>
        <dbReference type="ChEBI" id="CHEBI:58052"/>
    </ligand>
</feature>
<feature type="binding site" evidence="1">
    <location>
        <position position="613"/>
    </location>
    <ligand>
        <name>UDP-alpha-D-glucuronate</name>
        <dbReference type="ChEBI" id="CHEBI:58052"/>
    </ligand>
</feature>
<feature type="site" description="Transition state stabilizer" evidence="1">
    <location>
        <position position="102"/>
    </location>
</feature>
<feature type="site" description="Raises pKa of active site His" evidence="1">
    <location>
        <position position="140"/>
    </location>
</feature>
<organism>
    <name type="scientific">Salmonella typhimurium (strain LT2 / SGSC1412 / ATCC 700720)</name>
    <dbReference type="NCBI Taxonomy" id="99287"/>
    <lineage>
        <taxon>Bacteria</taxon>
        <taxon>Pseudomonadati</taxon>
        <taxon>Pseudomonadota</taxon>
        <taxon>Gammaproteobacteria</taxon>
        <taxon>Enterobacterales</taxon>
        <taxon>Enterobacteriaceae</taxon>
        <taxon>Salmonella</taxon>
    </lineage>
</organism>
<proteinExistence type="evidence at protein level"/>
<accession>O52325</accession>
<sequence>MKAVIFAYHDMGCQGVQAVLDAGYEIAAIFTHADNPAENTFFGSVSRQAAELGIPVYAPDNVNHPIWVDRIAELAPDIIFSFYYRNLLSEEILHLAPAGAFNLHGSLLPAYRGRAPLNWVLVNGESETGVTLHRMVKRADAGEIVASQRVAIAQDDVALTLHHKLCQAARQLLNSILPTMKCGDIPSVPQRESDSTYYGRRRPEDGLIDWHKPVSTVHNLVRAVAAPWPGAFSYNGSQKFTIWSSRMCPDAQGALPGSVISVSPLRVACADGALEIITGQAGDDITVQGSQLAQTLGLVAGARLNRPPATSGKRRIRVLILGVNGFIGNHLTERLLNEENYEVYGMDIGSNAISRFLLHPRFHFVEGDISIHSEWIEYHVKKCDVVLPLVAIATPIEYTRNPLRVFELDFEENLRIIRYCVKYRKRVVFPSTSEVYGMCTDASFDEDKSNLIVGPVNKPRWIYSVSKQLLDRVIWAYGEKEGLRFTLFRPFNWMGPRLDSLNAARIGSSRAITQLILNLVEGTPIKLIDGGQQKRCFTDIRDGIEALFRIIVNDGDRCDGKIINIGNPDNEASIQELATLLLDSFDKHPLRCHFPPFAGFQVVESRSYYGKGYQDVAHRKPSIDNARRCLGWEPSIAMRDTVEETLDFFLRSVDIAERAS</sequence>
<reference key="1">
    <citation type="journal article" date="1998" name="Mol. Microbiol.">
        <title>PmrA-PmrB-regulated genes necessary for 4-aminoarabinose lipid A modification and polymyxin resistance.</title>
        <authorList>
            <person name="Gunn J.S."/>
            <person name="Lim K.B."/>
            <person name="Krueger J."/>
            <person name="Kim K."/>
            <person name="Guo L."/>
            <person name="Hackett M."/>
            <person name="Miller S.I."/>
        </authorList>
    </citation>
    <scope>NUCLEOTIDE SEQUENCE [GENOMIC DNA]</scope>
    <source>
        <strain>ATCC 14028s / SGSG 2262</strain>
    </source>
</reference>
<reference key="2">
    <citation type="journal article" date="2001" name="Nature">
        <title>Complete genome sequence of Salmonella enterica serovar Typhimurium LT2.</title>
        <authorList>
            <person name="McClelland M."/>
            <person name="Sanderson K.E."/>
            <person name="Spieth J."/>
            <person name="Clifton S.W."/>
            <person name="Latreille P."/>
            <person name="Courtney L."/>
            <person name="Porwollik S."/>
            <person name="Ali J."/>
            <person name="Dante M."/>
            <person name="Du F."/>
            <person name="Hou S."/>
            <person name="Layman D."/>
            <person name="Leonard S."/>
            <person name="Nguyen C."/>
            <person name="Scott K."/>
            <person name="Holmes A."/>
            <person name="Grewal N."/>
            <person name="Mulvaney E."/>
            <person name="Ryan E."/>
            <person name="Sun H."/>
            <person name="Florea L."/>
            <person name="Miller W."/>
            <person name="Stoneking T."/>
            <person name="Nhan M."/>
            <person name="Waterston R."/>
            <person name="Wilson R.K."/>
        </authorList>
    </citation>
    <scope>NUCLEOTIDE SEQUENCE [LARGE SCALE GENOMIC DNA]</scope>
    <source>
        <strain>LT2 / SGSC1412 / ATCC 700720</strain>
    </source>
</reference>
<reference key="3">
    <citation type="journal article" date="1999" name="J. Biol. Chem.">
        <title>Molecular characterization of the PmrA regulon.</title>
        <authorList>
            <person name="Woesten M.M.S.M."/>
            <person name="Groisman E.A."/>
        </authorList>
    </citation>
    <scope>INDUCTION</scope>
    <source>
        <strain>ATCC 14028s / SGSG 2262</strain>
    </source>
</reference>
<reference key="4">
    <citation type="journal article" date="2004" name="Proc. Natl. Acad. Sci. U.S.A.">
        <title>Phenotypic differences between Salmonella and Escherichia coli resulting from the disparate regulation of homologous genes.</title>
        <authorList>
            <person name="Winfield M.D."/>
            <person name="Groisman E.A."/>
        </authorList>
    </citation>
    <scope>INDUCTION BY BASR</scope>
</reference>